<keyword id="KW-0342">GTP-binding</keyword>
<keyword id="KW-0378">Hydrolase</keyword>
<keyword id="KW-0479">Metal-binding</keyword>
<keyword id="KW-0547">Nucleotide-binding</keyword>
<keyword id="KW-1185">Reference proteome</keyword>
<keyword id="KW-0686">Riboflavin biosynthesis</keyword>
<keyword id="KW-0862">Zinc</keyword>
<name>RIBA_XYLFT</name>
<sequence>MNTPTHTHPHPFGSTATIRCERAAAELRTGRPVLLIDAHARRHAVMALDSMTAQSFATFANAVGNTHYLFLTPVRSNVLGLEAPQGARIPLATLSYDSLAKLAYLRQPTRPTAWAPGDIMDAAATEITRLALLLPAIVAAPLTQHTEHAFADCQTLDLADLDTAAACASTTEYELVTRTPVPLRDLGMSEFIVFRGGIAQRDQVAILIGRPDLSSAVPVRVHSSCLTGDLFGSLKCDCGDQLRHSLATLKALGGGVLLYLDQEGRGNGIAAKIRAYGYQHVGLDTIDADAQLGFGPDERRYTGAVMMLRALGITRIQLLSNNPAKAERLRAAGIIVKQRISVIGQITKQNEHYLRTKVSRAGHDLDIDALIMTSQRPQDPSETVDGETVKPIAKTGHA</sequence>
<feature type="chain" id="PRO_0000306416" description="GTP cyclohydrolase-2">
    <location>
        <begin position="1"/>
        <end position="398"/>
    </location>
</feature>
<feature type="region of interest" description="Unknown">
    <location>
        <begin position="1"/>
        <end position="172"/>
    </location>
</feature>
<feature type="region of interest" description="GTP cyclohydrolase II">
    <location>
        <begin position="173"/>
        <end position="398"/>
    </location>
</feature>
<feature type="region of interest" description="Disordered" evidence="3">
    <location>
        <begin position="375"/>
        <end position="398"/>
    </location>
</feature>
<feature type="active site" description="Proton acceptor" evidence="2">
    <location>
        <position position="297"/>
    </location>
</feature>
<feature type="active site" description="Nucleophile" evidence="1">
    <location>
        <position position="299"/>
    </location>
</feature>
<feature type="binding site" evidence="1">
    <location>
        <begin position="220"/>
        <end position="224"/>
    </location>
    <ligand>
        <name>GTP</name>
        <dbReference type="ChEBI" id="CHEBI:37565"/>
    </ligand>
</feature>
<feature type="binding site" evidence="1">
    <location>
        <position position="225"/>
    </location>
    <ligand>
        <name>Zn(2+)</name>
        <dbReference type="ChEBI" id="CHEBI:29105"/>
        <note>catalytic</note>
    </ligand>
</feature>
<feature type="binding site" evidence="1">
    <location>
        <position position="236"/>
    </location>
    <ligand>
        <name>Zn(2+)</name>
        <dbReference type="ChEBI" id="CHEBI:29105"/>
        <note>catalytic</note>
    </ligand>
</feature>
<feature type="binding site" evidence="1">
    <location>
        <position position="238"/>
    </location>
    <ligand>
        <name>Zn(2+)</name>
        <dbReference type="ChEBI" id="CHEBI:29105"/>
        <note>catalytic</note>
    </ligand>
</feature>
<feature type="binding site" evidence="1">
    <location>
        <position position="241"/>
    </location>
    <ligand>
        <name>GTP</name>
        <dbReference type="ChEBI" id="CHEBI:37565"/>
    </ligand>
</feature>
<feature type="binding site" evidence="1">
    <location>
        <begin position="263"/>
        <end position="265"/>
    </location>
    <ligand>
        <name>GTP</name>
        <dbReference type="ChEBI" id="CHEBI:37565"/>
    </ligand>
</feature>
<feature type="binding site" evidence="1">
    <location>
        <position position="285"/>
    </location>
    <ligand>
        <name>GTP</name>
        <dbReference type="ChEBI" id="CHEBI:37565"/>
    </ligand>
</feature>
<feature type="binding site" evidence="1">
    <location>
        <position position="320"/>
    </location>
    <ligand>
        <name>GTP</name>
        <dbReference type="ChEBI" id="CHEBI:37565"/>
    </ligand>
</feature>
<feature type="binding site" evidence="1">
    <location>
        <position position="325"/>
    </location>
    <ligand>
        <name>GTP</name>
        <dbReference type="ChEBI" id="CHEBI:37565"/>
    </ligand>
</feature>
<protein>
    <recommendedName>
        <fullName>GTP cyclohydrolase-2</fullName>
        <ecNumber>3.5.4.25</ecNumber>
    </recommendedName>
    <alternativeName>
        <fullName>GTP cyclohydrolase II</fullName>
    </alternativeName>
</protein>
<proteinExistence type="inferred from homology"/>
<evidence type="ECO:0000250" key="1"/>
<evidence type="ECO:0000255" key="2"/>
<evidence type="ECO:0000256" key="3">
    <source>
        <dbReference type="SAM" id="MobiDB-lite"/>
    </source>
</evidence>
<evidence type="ECO:0000305" key="4"/>
<organism>
    <name type="scientific">Xylella fastidiosa (strain Temecula1 / ATCC 700964)</name>
    <dbReference type="NCBI Taxonomy" id="183190"/>
    <lineage>
        <taxon>Bacteria</taxon>
        <taxon>Pseudomonadati</taxon>
        <taxon>Pseudomonadota</taxon>
        <taxon>Gammaproteobacteria</taxon>
        <taxon>Lysobacterales</taxon>
        <taxon>Lysobacteraceae</taxon>
        <taxon>Xylella</taxon>
    </lineage>
</organism>
<accession>Q87D69</accession>
<reference key="1">
    <citation type="journal article" date="2003" name="J. Bacteriol.">
        <title>Comparative analyses of the complete genome sequences of Pierce's disease and citrus variegated chlorosis strains of Xylella fastidiosa.</title>
        <authorList>
            <person name="Van Sluys M.A."/>
            <person name="de Oliveira M.C."/>
            <person name="Monteiro-Vitorello C.B."/>
            <person name="Miyaki C.Y."/>
            <person name="Furlan L.R."/>
            <person name="Camargo L.E.A."/>
            <person name="da Silva A.C.R."/>
            <person name="Moon D.H."/>
            <person name="Takita M.A."/>
            <person name="Lemos E.G.M."/>
            <person name="Machado M.A."/>
            <person name="Ferro M.I.T."/>
            <person name="da Silva F.R."/>
            <person name="Goldman M.H.S."/>
            <person name="Goldman G.H."/>
            <person name="Lemos M.V.F."/>
            <person name="El-Dorry H."/>
            <person name="Tsai S.M."/>
            <person name="Carrer H."/>
            <person name="Carraro D.M."/>
            <person name="de Oliveira R.C."/>
            <person name="Nunes L.R."/>
            <person name="Siqueira W.J."/>
            <person name="Coutinho L.L."/>
            <person name="Kimura E.T."/>
            <person name="Ferro E.S."/>
            <person name="Harakava R."/>
            <person name="Kuramae E.E."/>
            <person name="Marino C.L."/>
            <person name="Giglioti E."/>
            <person name="Abreu I.L."/>
            <person name="Alves L.M.C."/>
            <person name="do Amaral A.M."/>
            <person name="Baia G.S."/>
            <person name="Blanco S.R."/>
            <person name="Brito M.S."/>
            <person name="Cannavan F.S."/>
            <person name="Celestino A.V."/>
            <person name="da Cunha A.F."/>
            <person name="Fenille R.C."/>
            <person name="Ferro J.A."/>
            <person name="Formighieri E.F."/>
            <person name="Kishi L.T."/>
            <person name="Leoni S.G."/>
            <person name="Oliveira A.R."/>
            <person name="Rosa V.E. Jr."/>
            <person name="Sassaki F.T."/>
            <person name="Sena J.A.D."/>
            <person name="de Souza A.A."/>
            <person name="Truffi D."/>
            <person name="Tsukumo F."/>
            <person name="Yanai G.M."/>
            <person name="Zaros L.G."/>
            <person name="Civerolo E.L."/>
            <person name="Simpson A.J.G."/>
            <person name="Almeida N.F. Jr."/>
            <person name="Setubal J.C."/>
            <person name="Kitajima J.P."/>
        </authorList>
    </citation>
    <scope>NUCLEOTIDE SEQUENCE [LARGE SCALE GENOMIC DNA]</scope>
    <source>
        <strain>Temecula1 / ATCC 700964</strain>
    </source>
</reference>
<dbReference type="EC" id="3.5.4.25"/>
<dbReference type="EMBL" id="AE009442">
    <property type="protein sequence ID" value="AAO28685.1"/>
    <property type="molecule type" value="Genomic_DNA"/>
</dbReference>
<dbReference type="RefSeq" id="WP_004091147.1">
    <property type="nucleotide sequence ID" value="NC_004556.1"/>
</dbReference>
<dbReference type="SMR" id="Q87D69"/>
<dbReference type="GeneID" id="93904604"/>
<dbReference type="KEGG" id="xft:PD_0817"/>
<dbReference type="HOGENOM" id="CLU_020273_1_2_6"/>
<dbReference type="UniPathway" id="UPA00275">
    <property type="reaction ID" value="UER00400"/>
</dbReference>
<dbReference type="Proteomes" id="UP000002516">
    <property type="component" value="Chromosome"/>
</dbReference>
<dbReference type="GO" id="GO:0005829">
    <property type="term" value="C:cytosol"/>
    <property type="evidence" value="ECO:0007669"/>
    <property type="project" value="TreeGrafter"/>
</dbReference>
<dbReference type="GO" id="GO:0005525">
    <property type="term" value="F:GTP binding"/>
    <property type="evidence" value="ECO:0007669"/>
    <property type="project" value="UniProtKB-KW"/>
</dbReference>
<dbReference type="GO" id="GO:0003935">
    <property type="term" value="F:GTP cyclohydrolase II activity"/>
    <property type="evidence" value="ECO:0007669"/>
    <property type="project" value="UniProtKB-UniRule"/>
</dbReference>
<dbReference type="GO" id="GO:0008270">
    <property type="term" value="F:zinc ion binding"/>
    <property type="evidence" value="ECO:0007669"/>
    <property type="project" value="UniProtKB-UniRule"/>
</dbReference>
<dbReference type="GO" id="GO:0009231">
    <property type="term" value="P:riboflavin biosynthetic process"/>
    <property type="evidence" value="ECO:0007669"/>
    <property type="project" value="UniProtKB-UniRule"/>
</dbReference>
<dbReference type="CDD" id="cd00641">
    <property type="entry name" value="GTP_cyclohydro2"/>
    <property type="match status" value="1"/>
</dbReference>
<dbReference type="Gene3D" id="3.40.50.10990">
    <property type="entry name" value="GTP cyclohydrolase II"/>
    <property type="match status" value="1"/>
</dbReference>
<dbReference type="HAMAP" id="MF_00179">
    <property type="entry name" value="RibA"/>
    <property type="match status" value="1"/>
</dbReference>
<dbReference type="InterPro" id="IPR032677">
    <property type="entry name" value="GTP_cyclohydro_II"/>
</dbReference>
<dbReference type="InterPro" id="IPR000926">
    <property type="entry name" value="RibA"/>
</dbReference>
<dbReference type="InterPro" id="IPR036144">
    <property type="entry name" value="RibA-like_sf"/>
</dbReference>
<dbReference type="NCBIfam" id="NF001591">
    <property type="entry name" value="PRK00393.1"/>
    <property type="match status" value="1"/>
</dbReference>
<dbReference type="NCBIfam" id="NF006456">
    <property type="entry name" value="PRK08815.1"/>
    <property type="match status" value="1"/>
</dbReference>
<dbReference type="PANTHER" id="PTHR21327:SF18">
    <property type="entry name" value="3,4-DIHYDROXY-2-BUTANONE 4-PHOSPHATE SYNTHASE"/>
    <property type="match status" value="1"/>
</dbReference>
<dbReference type="PANTHER" id="PTHR21327">
    <property type="entry name" value="GTP CYCLOHYDROLASE II-RELATED"/>
    <property type="match status" value="1"/>
</dbReference>
<dbReference type="Pfam" id="PF00925">
    <property type="entry name" value="GTP_cyclohydro2"/>
    <property type="match status" value="1"/>
</dbReference>
<dbReference type="PIRSF" id="PIRSF001259">
    <property type="entry name" value="RibA"/>
    <property type="match status" value="1"/>
</dbReference>
<dbReference type="SUPFAM" id="SSF142695">
    <property type="entry name" value="RibA-like"/>
    <property type="match status" value="1"/>
</dbReference>
<gene>
    <name type="primary">ribA</name>
    <name type="ordered locus">PD_0817</name>
</gene>
<comment type="function">
    <text evidence="1">Catalyzes the conversion of GTP to 2,5-diamino-6-ribosylamino-4(3H)-pyrimidinone 5'-phosphate (DARP), formate and pyrophosphate.</text>
</comment>
<comment type="catalytic activity">
    <reaction>
        <text>GTP + 4 H2O = 2,5-diamino-6-hydroxy-4-(5-phosphoribosylamino)-pyrimidine + formate + 2 phosphate + 3 H(+)</text>
        <dbReference type="Rhea" id="RHEA:23704"/>
        <dbReference type="ChEBI" id="CHEBI:15377"/>
        <dbReference type="ChEBI" id="CHEBI:15378"/>
        <dbReference type="ChEBI" id="CHEBI:15740"/>
        <dbReference type="ChEBI" id="CHEBI:37565"/>
        <dbReference type="ChEBI" id="CHEBI:43474"/>
        <dbReference type="ChEBI" id="CHEBI:58614"/>
        <dbReference type="EC" id="3.5.4.25"/>
    </reaction>
</comment>
<comment type="cofactor">
    <cofactor evidence="1">
        <name>Zn(2+)</name>
        <dbReference type="ChEBI" id="CHEBI:29105"/>
    </cofactor>
    <text evidence="1">Binds 1 zinc ion per subunit.</text>
</comment>
<comment type="pathway">
    <text>Cofactor biosynthesis; riboflavin biosynthesis; 5-amino-6-(D-ribitylamino)uracil from GTP: step 1/4.</text>
</comment>
<comment type="similarity">
    <text evidence="4">In the C-terminal section; belongs to the GTP cyclohydrolase II family.</text>
</comment>